<organism>
    <name type="scientific">Methanothermobacter thermautotrophicus (strain ATCC 29096 / DSM 1053 / JCM 10044 / NBRC 100330 / Delta H)</name>
    <name type="common">Methanobacterium thermoautotrophicum</name>
    <dbReference type="NCBI Taxonomy" id="187420"/>
    <lineage>
        <taxon>Archaea</taxon>
        <taxon>Methanobacteriati</taxon>
        <taxon>Methanobacteriota</taxon>
        <taxon>Methanomada group</taxon>
        <taxon>Methanobacteria</taxon>
        <taxon>Methanobacteriales</taxon>
        <taxon>Methanobacteriaceae</taxon>
        <taxon>Methanothermobacter</taxon>
    </lineage>
</organism>
<name>PSTB_METTH</name>
<dbReference type="EC" id="7.3.2.1" evidence="1"/>
<dbReference type="EMBL" id="AE000666">
    <property type="protein sequence ID" value="AAB86201.1"/>
    <property type="molecule type" value="Genomic_DNA"/>
</dbReference>
<dbReference type="PIR" id="E69098">
    <property type="entry name" value="E69098"/>
</dbReference>
<dbReference type="SMR" id="O27764"/>
<dbReference type="FunCoup" id="O27764">
    <property type="interactions" value="39"/>
</dbReference>
<dbReference type="STRING" id="187420.MTH_1731"/>
<dbReference type="PaxDb" id="187420-MTH_1731"/>
<dbReference type="EnsemblBacteria" id="AAB86201">
    <property type="protein sequence ID" value="AAB86201"/>
    <property type="gene ID" value="MTH_1731"/>
</dbReference>
<dbReference type="KEGG" id="mth:MTH_1731"/>
<dbReference type="PATRIC" id="fig|187420.15.peg.1690"/>
<dbReference type="HOGENOM" id="CLU_000604_1_22_2"/>
<dbReference type="InParanoid" id="O27764"/>
<dbReference type="Proteomes" id="UP000005223">
    <property type="component" value="Chromosome"/>
</dbReference>
<dbReference type="GO" id="GO:0005886">
    <property type="term" value="C:plasma membrane"/>
    <property type="evidence" value="ECO:0007669"/>
    <property type="project" value="UniProtKB-SubCell"/>
</dbReference>
<dbReference type="GO" id="GO:0005524">
    <property type="term" value="F:ATP binding"/>
    <property type="evidence" value="ECO:0007669"/>
    <property type="project" value="UniProtKB-KW"/>
</dbReference>
<dbReference type="GO" id="GO:0016887">
    <property type="term" value="F:ATP hydrolysis activity"/>
    <property type="evidence" value="ECO:0007669"/>
    <property type="project" value="InterPro"/>
</dbReference>
<dbReference type="GO" id="GO:0015415">
    <property type="term" value="F:ATPase-coupled phosphate ion transmembrane transporter activity"/>
    <property type="evidence" value="ECO:0007669"/>
    <property type="project" value="UniProtKB-EC"/>
</dbReference>
<dbReference type="GO" id="GO:0035435">
    <property type="term" value="P:phosphate ion transmembrane transport"/>
    <property type="evidence" value="ECO:0007669"/>
    <property type="project" value="InterPro"/>
</dbReference>
<dbReference type="CDD" id="cd03260">
    <property type="entry name" value="ABC_PstB_phosphate_transporter"/>
    <property type="match status" value="1"/>
</dbReference>
<dbReference type="FunFam" id="3.40.50.300:FF:000132">
    <property type="entry name" value="Phosphate import ATP-binding protein PstB"/>
    <property type="match status" value="1"/>
</dbReference>
<dbReference type="Gene3D" id="3.40.50.300">
    <property type="entry name" value="P-loop containing nucleotide triphosphate hydrolases"/>
    <property type="match status" value="1"/>
</dbReference>
<dbReference type="InterPro" id="IPR003593">
    <property type="entry name" value="AAA+_ATPase"/>
</dbReference>
<dbReference type="InterPro" id="IPR003439">
    <property type="entry name" value="ABC_transporter-like_ATP-bd"/>
</dbReference>
<dbReference type="InterPro" id="IPR017871">
    <property type="entry name" value="ABC_transporter-like_CS"/>
</dbReference>
<dbReference type="InterPro" id="IPR027417">
    <property type="entry name" value="P-loop_NTPase"/>
</dbReference>
<dbReference type="InterPro" id="IPR005670">
    <property type="entry name" value="PstB-like"/>
</dbReference>
<dbReference type="NCBIfam" id="TIGR00972">
    <property type="entry name" value="3a0107s01c2"/>
    <property type="match status" value="1"/>
</dbReference>
<dbReference type="PANTHER" id="PTHR43423">
    <property type="entry name" value="ABC TRANSPORTER I FAMILY MEMBER 17"/>
    <property type="match status" value="1"/>
</dbReference>
<dbReference type="PANTHER" id="PTHR43423:SF1">
    <property type="entry name" value="ABC TRANSPORTER I FAMILY MEMBER 17"/>
    <property type="match status" value="1"/>
</dbReference>
<dbReference type="Pfam" id="PF00005">
    <property type="entry name" value="ABC_tran"/>
    <property type="match status" value="1"/>
</dbReference>
<dbReference type="SMART" id="SM00382">
    <property type="entry name" value="AAA"/>
    <property type="match status" value="1"/>
</dbReference>
<dbReference type="SUPFAM" id="SSF52540">
    <property type="entry name" value="P-loop containing nucleoside triphosphate hydrolases"/>
    <property type="match status" value="1"/>
</dbReference>
<dbReference type="PROSITE" id="PS00211">
    <property type="entry name" value="ABC_TRANSPORTER_1"/>
    <property type="match status" value="1"/>
</dbReference>
<dbReference type="PROSITE" id="PS50893">
    <property type="entry name" value="ABC_TRANSPORTER_2"/>
    <property type="match status" value="1"/>
</dbReference>
<dbReference type="PROSITE" id="PS51238">
    <property type="entry name" value="PSTB"/>
    <property type="match status" value="1"/>
</dbReference>
<comment type="function">
    <text evidence="1">Part of the ABC transporter complex PstSACB involved in phosphate import. Responsible for energy coupling to the transport system.</text>
</comment>
<comment type="catalytic activity">
    <reaction evidence="1">
        <text>phosphate(out) + ATP + H2O = ADP + 2 phosphate(in) + H(+)</text>
        <dbReference type="Rhea" id="RHEA:24440"/>
        <dbReference type="ChEBI" id="CHEBI:15377"/>
        <dbReference type="ChEBI" id="CHEBI:15378"/>
        <dbReference type="ChEBI" id="CHEBI:30616"/>
        <dbReference type="ChEBI" id="CHEBI:43474"/>
        <dbReference type="ChEBI" id="CHEBI:456216"/>
        <dbReference type="EC" id="7.3.2.1"/>
    </reaction>
</comment>
<comment type="subunit">
    <text evidence="1">The complex is composed of two ATP-binding proteins (PstB), two transmembrane proteins (PstC and PstA) and a solute-binding protein (PstS).</text>
</comment>
<comment type="subcellular location">
    <subcellularLocation>
        <location evidence="1">Cell membrane</location>
        <topology evidence="1">Peripheral membrane protein</topology>
    </subcellularLocation>
</comment>
<comment type="similarity">
    <text evidence="1">Belongs to the ABC transporter superfamily. Phosphate importer (TC 3.A.1.7) family.</text>
</comment>
<reference key="1">
    <citation type="journal article" date="1997" name="J. Bacteriol.">
        <title>Complete genome sequence of Methanobacterium thermoautotrophicum deltaH: functional analysis and comparative genomics.</title>
        <authorList>
            <person name="Smith D.R."/>
            <person name="Doucette-Stamm L.A."/>
            <person name="Deloughery C."/>
            <person name="Lee H.-M."/>
            <person name="Dubois J."/>
            <person name="Aldredge T."/>
            <person name="Bashirzadeh R."/>
            <person name="Blakely D."/>
            <person name="Cook R."/>
            <person name="Gilbert K."/>
            <person name="Harrison D."/>
            <person name="Hoang L."/>
            <person name="Keagle P."/>
            <person name="Lumm W."/>
            <person name="Pothier B."/>
            <person name="Qiu D."/>
            <person name="Spadafora R."/>
            <person name="Vicare R."/>
            <person name="Wang Y."/>
            <person name="Wierzbowski J."/>
            <person name="Gibson R."/>
            <person name="Jiwani N."/>
            <person name="Caruso A."/>
            <person name="Bush D."/>
            <person name="Safer H."/>
            <person name="Patwell D."/>
            <person name="Prabhakar S."/>
            <person name="McDougall S."/>
            <person name="Shimer G."/>
            <person name="Goyal A."/>
            <person name="Pietrovski S."/>
            <person name="Church G.M."/>
            <person name="Daniels C.J."/>
            <person name="Mao J.-I."/>
            <person name="Rice P."/>
            <person name="Noelling J."/>
            <person name="Reeve J.N."/>
        </authorList>
    </citation>
    <scope>NUCLEOTIDE SEQUENCE [LARGE SCALE GENOMIC DNA]</scope>
    <source>
        <strain>ATCC 29096 / DSM 1053 / JCM 10044 / NBRC 100330 / Delta H</strain>
    </source>
</reference>
<proteinExistence type="inferred from homology"/>
<evidence type="ECO:0000255" key="1">
    <source>
        <dbReference type="HAMAP-Rule" id="MF_01702"/>
    </source>
</evidence>
<accession>O27764</accession>
<keyword id="KW-0067">ATP-binding</keyword>
<keyword id="KW-1003">Cell membrane</keyword>
<keyword id="KW-0472">Membrane</keyword>
<keyword id="KW-0547">Nucleotide-binding</keyword>
<keyword id="KW-0592">Phosphate transport</keyword>
<keyword id="KW-1185">Reference proteome</keyword>
<keyword id="KW-1278">Translocase</keyword>
<keyword id="KW-0813">Transport</keyword>
<feature type="chain" id="PRO_0000092949" description="Phosphate import ATP-binding protein PstB">
    <location>
        <begin position="1"/>
        <end position="253"/>
    </location>
</feature>
<feature type="domain" description="ABC transporter" evidence="1">
    <location>
        <begin position="7"/>
        <end position="248"/>
    </location>
</feature>
<feature type="binding site" evidence="1">
    <location>
        <begin position="39"/>
        <end position="46"/>
    </location>
    <ligand>
        <name>ATP</name>
        <dbReference type="ChEBI" id="CHEBI:30616"/>
    </ligand>
</feature>
<gene>
    <name evidence="1" type="primary">pstB</name>
    <name type="ordered locus">MTH_1731</name>
</gene>
<sequence>MICMYRIEVEDLNVYFDEAHILKDINLKIPKNTVTALIGPSGCGKSTFIRTLNRMNDVISGFRHEGHVYLDGKDIYDPDMDVVELRKKVGMVFQKPNPFPKSIFENVAYGLRVHGYDDRDFIEERVEESLRAAALWDEVKDKLDKSALGLSGGQQQRLCIARTIAIEPEVILMDEPCSALDPISTTKIEDLIHKLKNDYTIIIVTHNMQQATRVSKYTAFFLHGEIVESGLTEQIFIEPRDKRTEDYITGRFG</sequence>
<protein>
    <recommendedName>
        <fullName evidence="1">Phosphate import ATP-binding protein PstB</fullName>
        <ecNumber evidence="1">7.3.2.1</ecNumber>
    </recommendedName>
    <alternativeName>
        <fullName evidence="1">ABC phosphate transporter</fullName>
    </alternativeName>
    <alternativeName>
        <fullName evidence="1">Phosphate-transporting ATPase</fullName>
    </alternativeName>
</protein>